<feature type="chain" id="PRO_0000069771" description="Mas-related G-protein coupled receptor member H">
    <location>
        <begin position="1"/>
        <end position="321"/>
    </location>
</feature>
<feature type="topological domain" description="Extracellular" evidence="1">
    <location>
        <begin position="1"/>
        <end position="35"/>
    </location>
</feature>
<feature type="transmembrane region" description="Helical; Name=1" evidence="1">
    <location>
        <begin position="36"/>
        <end position="56"/>
    </location>
</feature>
<feature type="topological domain" description="Cytoplasmic" evidence="1">
    <location>
        <begin position="57"/>
        <end position="71"/>
    </location>
</feature>
<feature type="transmembrane region" description="Helical; Name=2" evidence="1">
    <location>
        <begin position="72"/>
        <end position="92"/>
    </location>
</feature>
<feature type="topological domain" description="Extracellular" evidence="1">
    <location>
        <begin position="93"/>
        <end position="102"/>
    </location>
</feature>
<feature type="transmembrane region" description="Helical; Name=3" evidence="1">
    <location>
        <begin position="103"/>
        <end position="126"/>
    </location>
</feature>
<feature type="topological domain" description="Cytoplasmic" evidence="1">
    <location>
        <begin position="127"/>
        <end position="147"/>
    </location>
</feature>
<feature type="transmembrane region" description="Helical; Name=4" evidence="1">
    <location>
        <begin position="148"/>
        <end position="168"/>
    </location>
</feature>
<feature type="topological domain" description="Extracellular" evidence="1">
    <location>
        <begin position="169"/>
        <end position="188"/>
    </location>
</feature>
<feature type="transmembrane region" description="Helical; Name=5" evidence="1">
    <location>
        <begin position="189"/>
        <end position="209"/>
    </location>
</feature>
<feature type="topological domain" description="Cytoplasmic" evidence="1">
    <location>
        <begin position="210"/>
        <end position="225"/>
    </location>
</feature>
<feature type="transmembrane region" description="Helical; Name=6" evidence="1">
    <location>
        <begin position="226"/>
        <end position="246"/>
    </location>
</feature>
<feature type="topological domain" description="Extracellular" evidence="1">
    <location>
        <position position="247"/>
    </location>
</feature>
<feature type="transmembrane region" description="Helical; Name=7" evidence="1">
    <location>
        <begin position="248"/>
        <end position="271"/>
    </location>
</feature>
<feature type="topological domain" description="Cytoplasmic" evidence="1">
    <location>
        <begin position="272"/>
        <end position="320"/>
    </location>
</feature>
<feature type="glycosylation site" description="N-linked (GlcNAc...) asparagine" evidence="1">
    <location>
        <position position="23"/>
    </location>
</feature>
<reference key="1">
    <citation type="journal article" date="2003" name="Proc. Natl. Acad. Sci. U.S.A.">
        <title>Atypical expansion in mice of the sensory neuron-specific Mrg G protein-coupled receptor family.</title>
        <authorList>
            <person name="Zylka M.J."/>
            <person name="Dong X."/>
            <person name="Southwell A.L."/>
            <person name="Anderson D.J."/>
        </authorList>
    </citation>
    <scope>NUCLEOTIDE SEQUENCE [GENOMIC DNA]</scope>
    <source>
        <strain>Sprague-Dawley</strain>
    </source>
</reference>
<dbReference type="EMBL" id="AF518249">
    <property type="protein sequence ID" value="AAQ08321.1"/>
    <property type="molecule type" value="Genomic_DNA"/>
</dbReference>
<dbReference type="RefSeq" id="NP_001002281.1">
    <property type="nucleotide sequence ID" value="NM_001002281.1"/>
</dbReference>
<dbReference type="RefSeq" id="XP_006227944.1">
    <property type="nucleotide sequence ID" value="XM_006227882.3"/>
</dbReference>
<dbReference type="RefSeq" id="XP_017445004.1">
    <property type="nucleotide sequence ID" value="XM_017589515.1"/>
</dbReference>
<dbReference type="RefSeq" id="XP_017445005.1">
    <property type="nucleotide sequence ID" value="XM_017589516.1"/>
</dbReference>
<dbReference type="RefSeq" id="XP_017445006.1">
    <property type="nucleotide sequence ID" value="XM_017589517.1"/>
</dbReference>
<dbReference type="SMR" id="Q7TN38"/>
<dbReference type="FunCoup" id="Q7TN38">
    <property type="interactions" value="32"/>
</dbReference>
<dbReference type="STRING" id="10116.ENSRNOP00000020070"/>
<dbReference type="GlyCosmos" id="Q7TN38">
    <property type="glycosylation" value="1 site, No reported glycans"/>
</dbReference>
<dbReference type="GlyGen" id="Q7TN38">
    <property type="glycosylation" value="1 site"/>
</dbReference>
<dbReference type="PaxDb" id="10116-ENSRNOP00000020070"/>
<dbReference type="GeneID" id="404641"/>
<dbReference type="KEGG" id="rno:404641"/>
<dbReference type="AGR" id="RGD:738049"/>
<dbReference type="CTD" id="116511"/>
<dbReference type="RGD" id="738049">
    <property type="gene designation" value="Mrgprh"/>
</dbReference>
<dbReference type="eggNOG" id="ENOG502RTWA">
    <property type="taxonomic scope" value="Eukaryota"/>
</dbReference>
<dbReference type="HOGENOM" id="CLU_009579_4_1_1"/>
<dbReference type="InParanoid" id="Q7TN38"/>
<dbReference type="OrthoDB" id="63725at9989"/>
<dbReference type="PhylomeDB" id="Q7TN38"/>
<dbReference type="TreeFam" id="TF336336"/>
<dbReference type="PRO" id="PR:Q7TN38"/>
<dbReference type="Proteomes" id="UP000002494">
    <property type="component" value="Chromosome 1"/>
</dbReference>
<dbReference type="Bgee" id="ENSRNOG00000014965">
    <property type="expression patterns" value="Expressed in quadriceps femoris and 2 other cell types or tissues"/>
</dbReference>
<dbReference type="ExpressionAtlas" id="Q7TN38">
    <property type="expression patterns" value="baseline and differential"/>
</dbReference>
<dbReference type="GO" id="GO:0005886">
    <property type="term" value="C:plasma membrane"/>
    <property type="evidence" value="ECO:0000318"/>
    <property type="project" value="GO_Central"/>
</dbReference>
<dbReference type="GO" id="GO:0001595">
    <property type="term" value="F:angiotensin receptor activity"/>
    <property type="evidence" value="ECO:0000318"/>
    <property type="project" value="GO_Central"/>
</dbReference>
<dbReference type="GO" id="GO:0004930">
    <property type="term" value="F:G protein-coupled receptor activity"/>
    <property type="evidence" value="ECO:0000304"/>
    <property type="project" value="RGD"/>
</dbReference>
<dbReference type="GO" id="GO:0007186">
    <property type="term" value="P:G protein-coupled receptor signaling pathway"/>
    <property type="evidence" value="ECO:0000318"/>
    <property type="project" value="GO_Central"/>
</dbReference>
<dbReference type="CDD" id="cd15110">
    <property type="entry name" value="7tmA_MrgprH"/>
    <property type="match status" value="1"/>
</dbReference>
<dbReference type="FunFam" id="1.20.1070.10:FF:000134">
    <property type="entry name" value="proto-oncogene Mas"/>
    <property type="match status" value="1"/>
</dbReference>
<dbReference type="Gene3D" id="1.20.1070.10">
    <property type="entry name" value="Rhodopsin 7-helix transmembrane proteins"/>
    <property type="match status" value="1"/>
</dbReference>
<dbReference type="InterPro" id="IPR000276">
    <property type="entry name" value="GPCR_Rhodpsn"/>
</dbReference>
<dbReference type="InterPro" id="IPR017452">
    <property type="entry name" value="GPCR_Rhodpsn_7TM"/>
</dbReference>
<dbReference type="InterPro" id="IPR026234">
    <property type="entry name" value="MRGPCRFAMILY"/>
</dbReference>
<dbReference type="InterPro" id="IPR026221">
    <property type="entry name" value="MRGPCRH"/>
</dbReference>
<dbReference type="PANTHER" id="PTHR11334">
    <property type="entry name" value="MAS-RELATED G-PROTEIN COUPLED RECEPTOR"/>
    <property type="match status" value="1"/>
</dbReference>
<dbReference type="PANTHER" id="PTHR11334:SF60">
    <property type="entry name" value="MAS-RELATED G-PROTEIN COUPLED RECEPTOR MEMBER H"/>
    <property type="match status" value="1"/>
</dbReference>
<dbReference type="Pfam" id="PF00001">
    <property type="entry name" value="7tm_1"/>
    <property type="match status" value="1"/>
</dbReference>
<dbReference type="PRINTS" id="PR00237">
    <property type="entry name" value="GPCRRHODOPSN"/>
</dbReference>
<dbReference type="PRINTS" id="PR02108">
    <property type="entry name" value="MRGPCRFAMILY"/>
</dbReference>
<dbReference type="PRINTS" id="PR02113">
    <property type="entry name" value="MRGPCRH"/>
</dbReference>
<dbReference type="SUPFAM" id="SSF81321">
    <property type="entry name" value="Family A G protein-coupled receptor-like"/>
    <property type="match status" value="1"/>
</dbReference>
<dbReference type="PROSITE" id="PS00237">
    <property type="entry name" value="G_PROTEIN_RECEP_F1_1"/>
    <property type="match status" value="1"/>
</dbReference>
<dbReference type="PROSITE" id="PS50262">
    <property type="entry name" value="G_PROTEIN_RECEP_F1_2"/>
    <property type="match status" value="1"/>
</dbReference>
<keyword id="KW-1003">Cell membrane</keyword>
<keyword id="KW-0297">G-protein coupled receptor</keyword>
<keyword id="KW-0325">Glycoprotein</keyword>
<keyword id="KW-0472">Membrane</keyword>
<keyword id="KW-0675">Receptor</keyword>
<keyword id="KW-1185">Reference proteome</keyword>
<keyword id="KW-0807">Transducer</keyword>
<keyword id="KW-0812">Transmembrane</keyword>
<keyword id="KW-1133">Transmembrane helix</keyword>
<evidence type="ECO:0000255" key="1"/>
<evidence type="ECO:0000255" key="2">
    <source>
        <dbReference type="PROSITE-ProRule" id="PRU00521"/>
    </source>
</evidence>
<sequence length="321" mass="36780">MEPLATTLCPQECTQTTRNETPNETTWSSEHVTKYTYISISLVICSLGLVGNGLLIWFLIFCIKRKPFTIYILHLAFADFMVLLCSSIIQLVNTFHIYDSTLVSYAVLFMIFGYNTGLHLLTAISVERCLSVLYPIWYHCRRPKHQSTVACTLLWALSVLVSGLENFFCILEVKPQFPECRYVYIFSCTLTFLVFVPLMVFSNLILFIQVCCNLKPRQPAKLYVIIMATVILFLVFAMPMKVLLIIGYYSNSTDASVWKSLPYLNMLSTINCSINPIVYFVVGSLRRKRSRKSLKEALQKVFEEKPVVASRENEVQFSLPL</sequence>
<comment type="function">
    <text>Orphan receptor. May regulate nociceptor function and/or development, including the sensation or modulation of pain.</text>
</comment>
<comment type="subcellular location">
    <subcellularLocation>
        <location>Cell membrane</location>
        <topology>Multi-pass membrane protein</topology>
    </subcellularLocation>
</comment>
<comment type="similarity">
    <text evidence="2">Belongs to the G-protein coupled receptor 1 family. Mas subfamily.</text>
</comment>
<name>MRGRH_RAT</name>
<protein>
    <recommendedName>
        <fullName>Mas-related G-protein coupled receptor member H</fullName>
    </recommendedName>
</protein>
<accession>Q7TN38</accession>
<organism>
    <name type="scientific">Rattus norvegicus</name>
    <name type="common">Rat</name>
    <dbReference type="NCBI Taxonomy" id="10116"/>
    <lineage>
        <taxon>Eukaryota</taxon>
        <taxon>Metazoa</taxon>
        <taxon>Chordata</taxon>
        <taxon>Craniata</taxon>
        <taxon>Vertebrata</taxon>
        <taxon>Euteleostomi</taxon>
        <taxon>Mammalia</taxon>
        <taxon>Eutheria</taxon>
        <taxon>Euarchontoglires</taxon>
        <taxon>Glires</taxon>
        <taxon>Rodentia</taxon>
        <taxon>Myomorpha</taxon>
        <taxon>Muroidea</taxon>
        <taxon>Muridae</taxon>
        <taxon>Murinae</taxon>
        <taxon>Rattus</taxon>
    </lineage>
</organism>
<proteinExistence type="inferred from homology"/>
<gene>
    <name type="primary">Mrgprh</name>
    <name type="synonym">Mrgh</name>
</gene>